<name>YCF54_ARATH</name>
<reference key="1">
    <citation type="journal article" date="2000" name="DNA Res.">
        <title>Structural analysis of Arabidopsis thaliana chromosome 5. X. Sequence features of the regions of 3,076,755 bp covered by sixty P1 and TAC clones.</title>
        <authorList>
            <person name="Sato S."/>
            <person name="Nakamura Y."/>
            <person name="Kaneko T."/>
            <person name="Katoh T."/>
            <person name="Asamizu E."/>
            <person name="Kotani H."/>
            <person name="Tabata S."/>
        </authorList>
    </citation>
    <scope>NUCLEOTIDE SEQUENCE [LARGE SCALE GENOMIC DNA]</scope>
    <source>
        <strain>cv. Columbia</strain>
    </source>
</reference>
<reference key="2">
    <citation type="journal article" date="2017" name="Plant J.">
        <title>Araport11: a complete reannotation of the Arabidopsis thaliana reference genome.</title>
        <authorList>
            <person name="Cheng C.Y."/>
            <person name="Krishnakumar V."/>
            <person name="Chan A.P."/>
            <person name="Thibaud-Nissen F."/>
            <person name="Schobel S."/>
            <person name="Town C.D."/>
        </authorList>
    </citation>
    <scope>GENOME REANNOTATION</scope>
    <source>
        <strain>cv. Columbia</strain>
    </source>
</reference>
<reference key="3">
    <citation type="submission" date="2004-03" db="EMBL/GenBank/DDBJ databases">
        <title>Arabidopsis ORF clones.</title>
        <authorList>
            <person name="Cheuk R.F."/>
            <person name="Chen H."/>
            <person name="Kim C.J."/>
            <person name="Shinn P."/>
            <person name="Ecker J.R."/>
        </authorList>
    </citation>
    <scope>NUCLEOTIDE SEQUENCE [LARGE SCALE MRNA]</scope>
    <source>
        <strain>cv. Columbia</strain>
    </source>
</reference>
<reference key="4">
    <citation type="journal article" date="2018" name="Plant J.">
        <title>Potential roles of YCF54 and ferredoxin-NADPH reductase for magnesium protoporphyrin monomethylester cyclase.</title>
        <authorList>
            <person name="Herbst J."/>
            <person name="Girke A."/>
            <person name="Hajirezaei M.R."/>
            <person name="Hanke G."/>
            <person name="Grimm B."/>
        </authorList>
    </citation>
    <scope>FUNCTION</scope>
    <scope>DISRUPTION PHENOTYPE</scope>
    <scope>INTERACTION WITH LFNR1 AND CRD1/CHL27</scope>
    <source>
        <strain>cv. Columbia</strain>
    </source>
</reference>
<feature type="transit peptide" description="Chloroplast" evidence="1">
    <location>
        <begin position="1"/>
        <end position="80"/>
    </location>
</feature>
<feature type="chain" id="PRO_0000459112" description="Protein YCF54, chloroplastic">
    <location>
        <begin position="81"/>
        <end position="211"/>
    </location>
</feature>
<feature type="sequence conflict" description="In Ref. 3; AAS76694/AAS88783." evidence="4" ref="3">
    <original>A</original>
    <variation>T</variation>
    <location>
        <position position="188"/>
    </location>
</feature>
<evidence type="ECO:0000255" key="1"/>
<evidence type="ECO:0000269" key="2">
    <source>
    </source>
</evidence>
<evidence type="ECO:0000303" key="3">
    <source>
    </source>
</evidence>
<evidence type="ECO:0000305" key="4"/>
<evidence type="ECO:0000312" key="5">
    <source>
        <dbReference type="Araport" id="AT5G58250"/>
    </source>
</evidence>
<evidence type="ECO:0000312" key="6">
    <source>
        <dbReference type="EMBL" id="BAA96916.1"/>
    </source>
</evidence>
<accession>Q9LVM3</accession>
<accession>Q6NLE1</accession>
<sequence>MWSVTGALTVAVPPTAAACRTKPFLISSSFPKQTKKLHLSSPSLSLPSSHFSSSFKTAATSIEQQSSVNKGESTKYHFLVANAKFMLDEEEHFQEQLFERLRYFGERELVQDFWLVIEPKFLDNFPKITQRLRRPAVALVSTNGTWITFMKLRLDRVLYDSFEATSLDEALASNPTTLEFDKPKNWVAPYPKYEPGWWDTFLPKVTQESAV</sequence>
<organism>
    <name type="scientific">Arabidopsis thaliana</name>
    <name type="common">Mouse-ear cress</name>
    <dbReference type="NCBI Taxonomy" id="3702"/>
    <lineage>
        <taxon>Eukaryota</taxon>
        <taxon>Viridiplantae</taxon>
        <taxon>Streptophyta</taxon>
        <taxon>Embryophyta</taxon>
        <taxon>Tracheophyta</taxon>
        <taxon>Spermatophyta</taxon>
        <taxon>Magnoliopsida</taxon>
        <taxon>eudicotyledons</taxon>
        <taxon>Gunneridae</taxon>
        <taxon>Pentapetalae</taxon>
        <taxon>rosids</taxon>
        <taxon>malvids</taxon>
        <taxon>Brassicales</taxon>
        <taxon>Brassicaceae</taxon>
        <taxon>Camelineae</taxon>
        <taxon>Arabidopsis</taxon>
    </lineage>
</organism>
<keyword id="KW-0150">Chloroplast</keyword>
<keyword id="KW-0934">Plastid</keyword>
<keyword id="KW-1185">Reference proteome</keyword>
<keyword id="KW-0809">Transit peptide</keyword>
<comment type="function">
    <text evidence="2">Involved in the biosynthesis of chlorophyll; acts probably as a scaffolding factor in the MgProto monomethylester (MgProtoME) cyclase complex to stabilize CRD1/CHL27, the catalytic subunit which catalyzes the formation of a fifth isocyclic ring to tetrapyrroles to form protochlorophyllide (PubMed:29443418).</text>
</comment>
<comment type="subunit">
    <text evidence="2">Interacts with LFNR1 and CRD1/CHL27 in chloroplasts.</text>
</comment>
<comment type="subcellular location">
    <subcellularLocation>
        <location evidence="1">Plastid</location>
        <location evidence="1">Chloroplast</location>
    </subcellularLocation>
</comment>
<comment type="disruption phenotype">
    <text evidence="2">Accumulation of MgProto monomethylester (MgProtoME) as a result of decreased CRD1/CHL27 accumulation leading to reduced cyclase activity of the MgProto monomethylester (MgProtoME) cyclase complex (PubMed:29443418). Leaf chlorosis due to a massive loss of photosynthetic protein complexes (PubMed:29443418).</text>
</comment>
<comment type="similarity">
    <text evidence="4">Belongs to the ycf54 family.</text>
</comment>
<comment type="online information" name="Seed defective Arabidopsis mutants">
    <link uri="http://seedgenes.org/MutantList"/>
</comment>
<dbReference type="EMBL" id="AB019228">
    <property type="protein sequence ID" value="BAA96916.1"/>
    <property type="molecule type" value="Genomic_DNA"/>
</dbReference>
<dbReference type="EMBL" id="CP002688">
    <property type="protein sequence ID" value="AED97024.1"/>
    <property type="molecule type" value="Genomic_DNA"/>
</dbReference>
<dbReference type="EMBL" id="BT012207">
    <property type="protein sequence ID" value="AAS76694.1"/>
    <property type="molecule type" value="mRNA"/>
</dbReference>
<dbReference type="EMBL" id="BT012393">
    <property type="protein sequence ID" value="AAS88783.1"/>
    <property type="molecule type" value="mRNA"/>
</dbReference>
<dbReference type="RefSeq" id="NP_200633.1">
    <property type="nucleotide sequence ID" value="NM_125210.5"/>
</dbReference>
<dbReference type="SMR" id="Q9LVM3"/>
<dbReference type="FunCoup" id="Q9LVM3">
    <property type="interactions" value="1060"/>
</dbReference>
<dbReference type="STRING" id="3702.Q9LVM3"/>
<dbReference type="GlyGen" id="Q9LVM3">
    <property type="glycosylation" value="1 site"/>
</dbReference>
<dbReference type="PaxDb" id="3702-AT5G58250.1"/>
<dbReference type="ProMEX" id="Q9LVM3"/>
<dbReference type="ProteomicsDB" id="191483"/>
<dbReference type="EnsemblPlants" id="AT5G58250.1">
    <property type="protein sequence ID" value="AT5G58250.1"/>
    <property type="gene ID" value="AT5G58250"/>
</dbReference>
<dbReference type="GeneID" id="835937"/>
<dbReference type="Gramene" id="AT5G58250.1">
    <property type="protein sequence ID" value="AT5G58250.1"/>
    <property type="gene ID" value="AT5G58250"/>
</dbReference>
<dbReference type="KEGG" id="ath:AT5G58250"/>
<dbReference type="Araport" id="AT5G58250"/>
<dbReference type="TAIR" id="AT5G58250">
    <property type="gene designation" value="EMB3143"/>
</dbReference>
<dbReference type="eggNOG" id="ENOG502RY7F">
    <property type="taxonomic scope" value="Eukaryota"/>
</dbReference>
<dbReference type="HOGENOM" id="CLU_090138_1_0_1"/>
<dbReference type="OMA" id="EFGWWES"/>
<dbReference type="OrthoDB" id="5200at2759"/>
<dbReference type="PRO" id="PR:Q9LVM3"/>
<dbReference type="Proteomes" id="UP000006548">
    <property type="component" value="Chromosome 5"/>
</dbReference>
<dbReference type="ExpressionAtlas" id="Q9LVM3">
    <property type="expression patterns" value="baseline and differential"/>
</dbReference>
<dbReference type="GO" id="GO:0009507">
    <property type="term" value="C:chloroplast"/>
    <property type="evidence" value="ECO:0007005"/>
    <property type="project" value="TAIR"/>
</dbReference>
<dbReference type="GO" id="GO:0009536">
    <property type="term" value="C:plastid"/>
    <property type="evidence" value="ECO:0007005"/>
    <property type="project" value="TAIR"/>
</dbReference>
<dbReference type="GO" id="GO:0009579">
    <property type="term" value="C:thylakoid"/>
    <property type="evidence" value="ECO:0007005"/>
    <property type="project" value="TAIR"/>
</dbReference>
<dbReference type="GO" id="GO:0048529">
    <property type="term" value="F:magnesium-protoporphyrin IX monomethyl ester (oxidative) cyclase activity"/>
    <property type="evidence" value="ECO:0000315"/>
    <property type="project" value="TAIR"/>
</dbReference>
<dbReference type="GO" id="GO:0015995">
    <property type="term" value="P:chlorophyll biosynthetic process"/>
    <property type="evidence" value="ECO:0000315"/>
    <property type="project" value="TAIR"/>
</dbReference>
<dbReference type="Gene3D" id="3.30.70.1860">
    <property type="entry name" value="Uncharacterised protein family Ycf54"/>
    <property type="match status" value="1"/>
</dbReference>
<dbReference type="InterPro" id="IPR019616">
    <property type="entry name" value="Ycf54"/>
</dbReference>
<dbReference type="InterPro" id="IPR038409">
    <property type="entry name" value="Ycf54-like_sf"/>
</dbReference>
<dbReference type="PANTHER" id="PTHR35319">
    <property type="match status" value="1"/>
</dbReference>
<dbReference type="PANTHER" id="PTHR35319:SF2">
    <property type="entry name" value="YCF54"/>
    <property type="match status" value="1"/>
</dbReference>
<dbReference type="Pfam" id="PF10674">
    <property type="entry name" value="Ycf54"/>
    <property type="match status" value="1"/>
</dbReference>
<protein>
    <recommendedName>
        <fullName evidence="3">Protein YCF54, chloroplastic</fullName>
    </recommendedName>
    <alternativeName>
        <fullName evidence="3">Protein LOW CHLOROPHYLL ACCUMULATION</fullName>
    </alternativeName>
</protein>
<proteinExistence type="evidence at protein level"/>
<gene>
    <name evidence="3" type="primary">YCF54</name>
    <name type="synonym">EMB3143</name>
    <name evidence="3" type="synonym">LCAA</name>
    <name evidence="5" type="ordered locus">At5g58250</name>
    <name evidence="6" type="ORF">MCK7.12</name>
</gene>